<evidence type="ECO:0000250" key="1"/>
<evidence type="ECO:0000250" key="2">
    <source>
        <dbReference type="UniProtKB" id="A8R7E6"/>
    </source>
</evidence>
<evidence type="ECO:0000255" key="3"/>
<evidence type="ECO:0000255" key="4">
    <source>
        <dbReference type="PROSITE-ProRule" id="PRU00159"/>
    </source>
</evidence>
<evidence type="ECO:0000255" key="5">
    <source>
        <dbReference type="PROSITE-ProRule" id="PRU00498"/>
    </source>
</evidence>
<evidence type="ECO:0000255" key="6">
    <source>
        <dbReference type="PROSITE-ProRule" id="PRU01118"/>
    </source>
</evidence>
<evidence type="ECO:0000269" key="7">
    <source>
    </source>
</evidence>
<evidence type="ECO:0000269" key="8">
    <source>
    </source>
</evidence>
<evidence type="ECO:0000269" key="9">
    <source>
    </source>
</evidence>
<evidence type="ECO:0000269" key="10">
    <source>
    </source>
</evidence>
<evidence type="ECO:0000269" key="11">
    <source>
    </source>
</evidence>
<evidence type="ECO:0000303" key="12">
    <source>
    </source>
</evidence>
<evidence type="ECO:0000305" key="13"/>
<evidence type="ECO:0000312" key="14">
    <source>
        <dbReference type="EMBL" id="BAD01244.1"/>
    </source>
</evidence>
<evidence type="ECO:0000312" key="15">
    <source>
        <dbReference type="EMBL" id="BAD33138.1"/>
    </source>
</evidence>
<evidence type="ECO:0000312" key="16">
    <source>
        <dbReference type="EMBL" id="BAT06465.1"/>
    </source>
</evidence>
<evidence type="ECO:0007829" key="17">
    <source>
        <dbReference type="PDB" id="7VS7"/>
    </source>
</evidence>
<sequence>MEASTSLLVLVLAAAAFAAGTVTEAAGDGCSAGCDLALASFYVTPNQNVTNMADLFGIGAANYRSLAPYNPNIPNLDFINVGGRVNVYFTCGCRSLPGSPGATYLAGAFPFQMSRGQIYTSVAANYNNLTTAEWLQATNSYPANNIPDTAVINATVNCSCGDASISPDYGLFLTYPLRAEDTLASVAATYGLSSQLDVVRRYNPGMESATGSGIVYIPVKDPNGSYLPLKSPGKGASAGAIAGGVVAGVVVLAAIFLYIIFYRRRKAKQATLLQSSEDSTQLGTISMDKVTPSTIVGPSPVAGITVDKSVEFSYEELSNATQGFSIGNKIGQGGFGAVYYAELRGEKAAIKKMDMQATHEFLAELKVLTHVHHLNLVRLIGYCIESSLFLVYEFIENGNLSQHLRGMGYEPLSWAARIQIALDSARGLEYIHEHTVPVYIHRDIKSANILIDKNYRAKVADFGLTKLTEVGGTSMPTGTRVVGTFGYMPPEYARYGDVSPKVDVYAFGVVLYELISAKEAIVRSTESSSDSKGLVYLFEEALNSPDPKEGLRTLIDPKLGEDYPIDSILKLTQLAKVCTQEDPKLRPSMRSVVVALMTLSSTSEFWDMNNLYENQGLVNLMSGR</sequence>
<gene>
    <name evidence="12" type="primary">CERK1</name>
    <name evidence="12" type="synonym">RLK9</name>
    <name evidence="16" type="ordered locus">Os08g0538300</name>
    <name evidence="13" type="ordered locus">LOC_Os08g42580</name>
    <name evidence="14" type="ORF">P0665C04.34</name>
    <name evidence="15" type="ORF">P0666G10.101</name>
</gene>
<feature type="signal peptide" evidence="3">
    <location>
        <begin position="1"/>
        <end position="18"/>
    </location>
</feature>
<feature type="chain" id="PRO_5006057118" description="Chitin elicitor receptor kinase 1" evidence="3">
    <location>
        <begin position="19"/>
        <end position="624"/>
    </location>
</feature>
<feature type="topological domain" description="Extracellular" evidence="13">
    <location>
        <begin position="19"/>
        <end position="240"/>
    </location>
</feature>
<feature type="transmembrane region" description="Helical" evidence="3">
    <location>
        <begin position="241"/>
        <end position="261"/>
    </location>
</feature>
<feature type="topological domain" description="Cytoplasmic" evidence="13">
    <location>
        <begin position="262"/>
        <end position="624"/>
    </location>
</feature>
<feature type="domain" description="LysM" evidence="6">
    <location>
        <begin position="173"/>
        <end position="218"/>
    </location>
</feature>
<feature type="domain" description="Protein kinase" evidence="4">
    <location>
        <begin position="324"/>
        <end position="599"/>
    </location>
</feature>
<feature type="active site" description="Proton acceptor" evidence="4">
    <location>
        <position position="443"/>
    </location>
</feature>
<feature type="binding site" evidence="2">
    <location>
        <begin position="115"/>
        <end position="121"/>
    </location>
    <ligand>
        <name>chitin</name>
        <dbReference type="ChEBI" id="CHEBI:17029"/>
    </ligand>
</feature>
<feature type="binding site" evidence="2">
    <location>
        <begin position="142"/>
        <end position="148"/>
    </location>
    <ligand>
        <name>chitin</name>
        <dbReference type="ChEBI" id="CHEBI:17029"/>
    </ligand>
</feature>
<feature type="binding site" evidence="4">
    <location>
        <begin position="330"/>
        <end position="338"/>
    </location>
    <ligand>
        <name>ATP</name>
        <dbReference type="ChEBI" id="CHEBI:30616"/>
    </ligand>
</feature>
<feature type="binding site" evidence="4">
    <location>
        <position position="351"/>
    </location>
    <ligand>
        <name>ATP</name>
        <dbReference type="ChEBI" id="CHEBI:30616"/>
    </ligand>
</feature>
<feature type="glycosylation site" description="N-linked (GlcNAc...) asparagine" evidence="5">
    <location>
        <position position="48"/>
    </location>
</feature>
<feature type="glycosylation site" description="N-linked (GlcNAc...) asparagine" evidence="5">
    <location>
        <position position="128"/>
    </location>
</feature>
<feature type="glycosylation site" description="N-linked (GlcNAc...) asparagine" evidence="5">
    <location>
        <position position="153"/>
    </location>
</feature>
<feature type="glycosylation site" description="N-linked (GlcNAc...) asparagine" evidence="5">
    <location>
        <position position="157"/>
    </location>
</feature>
<feature type="glycosylation site" description="N-linked (GlcNAc...) asparagine" evidence="5">
    <location>
        <position position="223"/>
    </location>
</feature>
<feature type="disulfide bond" evidence="2">
    <location>
        <begin position="30"/>
        <end position="93"/>
    </location>
</feature>
<feature type="disulfide bond" evidence="2">
    <location>
        <begin position="34"/>
        <end position="160"/>
    </location>
</feature>
<feature type="disulfide bond" evidence="2">
    <location>
        <begin position="91"/>
        <end position="158"/>
    </location>
</feature>
<feature type="strand" evidence="17">
    <location>
        <begin position="34"/>
        <end position="42"/>
    </location>
</feature>
<feature type="helix" evidence="17">
    <location>
        <begin position="49"/>
        <end position="55"/>
    </location>
</feature>
<feature type="helix" evidence="17">
    <location>
        <begin position="60"/>
        <end position="69"/>
    </location>
</feature>
<feature type="strand" evidence="17">
    <location>
        <begin position="84"/>
        <end position="95"/>
    </location>
</feature>
<feature type="strand" evidence="17">
    <location>
        <begin position="99"/>
        <end position="101"/>
    </location>
</feature>
<feature type="strand" evidence="17">
    <location>
        <begin position="103"/>
        <end position="112"/>
    </location>
</feature>
<feature type="helix" evidence="17">
    <location>
        <begin position="119"/>
        <end position="123"/>
    </location>
</feature>
<feature type="helix" evidence="17">
    <location>
        <begin position="124"/>
        <end position="129"/>
    </location>
</feature>
<feature type="helix" evidence="17">
    <location>
        <begin position="132"/>
        <end position="138"/>
    </location>
</feature>
<feature type="strand" evidence="17">
    <location>
        <begin position="139"/>
        <end position="141"/>
    </location>
</feature>
<feature type="helix" evidence="17">
    <location>
        <begin position="143"/>
        <end position="145"/>
    </location>
</feature>
<feature type="strand" evidence="17">
    <location>
        <begin position="151"/>
        <end position="157"/>
    </location>
</feature>
<feature type="turn" evidence="17">
    <location>
        <begin position="163"/>
        <end position="165"/>
    </location>
</feature>
<feature type="strand" evidence="17">
    <location>
        <begin position="172"/>
        <end position="176"/>
    </location>
</feature>
<feature type="helix" evidence="17">
    <location>
        <begin position="183"/>
        <end position="189"/>
    </location>
</feature>
<feature type="helix" evidence="17">
    <location>
        <begin position="193"/>
        <end position="195"/>
    </location>
</feature>
<feature type="helix" evidence="17">
    <location>
        <begin position="196"/>
        <end position="202"/>
    </location>
</feature>
<feature type="strand" evidence="17">
    <location>
        <begin position="210"/>
        <end position="218"/>
    </location>
</feature>
<accession>A0A0P0XII1</accession>
<accession>B7F461</accession>
<accession>Q0J431</accession>
<accession>Q6ZD33</accession>
<dbReference type="EC" id="2.7.11.1" evidence="9"/>
<dbReference type="EMBL" id="AP004464">
    <property type="protein sequence ID" value="BAD01244.1"/>
    <property type="status" value="ALT_SEQ"/>
    <property type="molecule type" value="Genomic_DNA"/>
</dbReference>
<dbReference type="EMBL" id="AP004592">
    <property type="protein sequence ID" value="BAD33138.1"/>
    <property type="status" value="ALT_SEQ"/>
    <property type="molecule type" value="Genomic_DNA"/>
</dbReference>
<dbReference type="EMBL" id="AP008214">
    <property type="protein sequence ID" value="BAF24284.1"/>
    <property type="status" value="ALT_SEQ"/>
    <property type="molecule type" value="Genomic_DNA"/>
</dbReference>
<dbReference type="EMBL" id="AP014964">
    <property type="protein sequence ID" value="BAT06465.1"/>
    <property type="molecule type" value="Genomic_DNA"/>
</dbReference>
<dbReference type="EMBL" id="AK111766">
    <property type="protein sequence ID" value="BAG99408.1"/>
    <property type="status" value="ALT_INIT"/>
    <property type="molecule type" value="mRNA"/>
</dbReference>
<dbReference type="EMBL" id="AK112001">
    <property type="protein sequence ID" value="BAG99505.1"/>
    <property type="status" value="ALT_INIT"/>
    <property type="molecule type" value="mRNA"/>
</dbReference>
<dbReference type="RefSeq" id="XP_015650771.1">
    <property type="nucleotide sequence ID" value="XM_015795285.1"/>
</dbReference>
<dbReference type="PDB" id="7VS7">
    <property type="method" value="X-ray"/>
    <property type="resolution" value="2.02 A"/>
    <property type="chains" value="A=27-237"/>
</dbReference>
<dbReference type="PDBsum" id="7VS7"/>
<dbReference type="SMR" id="A0A0P0XII1"/>
<dbReference type="FunCoup" id="A0A0P0XII1">
    <property type="interactions" value="1020"/>
</dbReference>
<dbReference type="STRING" id="39947.A0A0P0XII1"/>
<dbReference type="GlyCosmos" id="A0A0P0XII1">
    <property type="glycosylation" value="5 sites, No reported glycans"/>
</dbReference>
<dbReference type="PaxDb" id="39947-A0A0P0XII1"/>
<dbReference type="EnsemblPlants" id="Os08t0538300-01">
    <property type="protein sequence ID" value="Os08t0538300-01"/>
    <property type="gene ID" value="Os08g0538300"/>
</dbReference>
<dbReference type="Gramene" id="Os08t0538300-01">
    <property type="protein sequence ID" value="Os08t0538300-01"/>
    <property type="gene ID" value="Os08g0538300"/>
</dbReference>
<dbReference type="KEGG" id="dosa:Os08g0538300"/>
<dbReference type="eggNOG" id="ENOG502QPX8">
    <property type="taxonomic scope" value="Eukaryota"/>
</dbReference>
<dbReference type="InParanoid" id="A0A0P0XII1"/>
<dbReference type="OMA" id="PWTKRVQ"/>
<dbReference type="OrthoDB" id="4062651at2759"/>
<dbReference type="PlantReactome" id="R-OSA-9611432">
    <property type="pathway name" value="Recognition of fungal and bacterial pathogens and immunity response"/>
</dbReference>
<dbReference type="Proteomes" id="UP000000763">
    <property type="component" value="Chromosome 8"/>
</dbReference>
<dbReference type="Proteomes" id="UP000059680">
    <property type="component" value="Chromosome 8"/>
</dbReference>
<dbReference type="ExpressionAtlas" id="A0A0P0XII1">
    <property type="expression patterns" value="baseline and differential"/>
</dbReference>
<dbReference type="GO" id="GO:0005886">
    <property type="term" value="C:plasma membrane"/>
    <property type="evidence" value="ECO:0007669"/>
    <property type="project" value="UniProtKB-SubCell"/>
</dbReference>
<dbReference type="GO" id="GO:0005524">
    <property type="term" value="F:ATP binding"/>
    <property type="evidence" value="ECO:0007669"/>
    <property type="project" value="UniProtKB-KW"/>
</dbReference>
<dbReference type="GO" id="GO:0008061">
    <property type="term" value="F:chitin binding"/>
    <property type="evidence" value="ECO:0007669"/>
    <property type="project" value="UniProtKB-KW"/>
</dbReference>
<dbReference type="GO" id="GO:0106310">
    <property type="term" value="F:protein serine kinase activity"/>
    <property type="evidence" value="ECO:0007669"/>
    <property type="project" value="RHEA"/>
</dbReference>
<dbReference type="GO" id="GO:0004674">
    <property type="term" value="F:protein serine/threonine kinase activity"/>
    <property type="evidence" value="ECO:0007669"/>
    <property type="project" value="UniProtKB-KW"/>
</dbReference>
<dbReference type="GO" id="GO:0019199">
    <property type="term" value="F:transmembrane receptor protein kinase activity"/>
    <property type="evidence" value="ECO:0007669"/>
    <property type="project" value="InterPro"/>
</dbReference>
<dbReference type="GO" id="GO:0045087">
    <property type="term" value="P:innate immune response"/>
    <property type="evidence" value="ECO:0007669"/>
    <property type="project" value="UniProtKB-KW"/>
</dbReference>
<dbReference type="CDD" id="cd14066">
    <property type="entry name" value="STKc_IRAK"/>
    <property type="match status" value="1"/>
</dbReference>
<dbReference type="FunFam" id="3.30.200.20:FF:000468">
    <property type="entry name" value="LysM receptor kinase 2"/>
    <property type="match status" value="1"/>
</dbReference>
<dbReference type="FunFam" id="1.10.510.10:FF:000468">
    <property type="entry name" value="PTI1-like tyrosine-protein kinase 3"/>
    <property type="match status" value="1"/>
</dbReference>
<dbReference type="Gene3D" id="3.30.200.20">
    <property type="entry name" value="Phosphorylase Kinase, domain 1"/>
    <property type="match status" value="1"/>
</dbReference>
<dbReference type="Gene3D" id="1.10.510.10">
    <property type="entry name" value="Transferase(Phosphotransferase) domain 1"/>
    <property type="match status" value="1"/>
</dbReference>
<dbReference type="InterPro" id="IPR044812">
    <property type="entry name" value="CERK1/LYK3-like"/>
</dbReference>
<dbReference type="InterPro" id="IPR011009">
    <property type="entry name" value="Kinase-like_dom_sf"/>
</dbReference>
<dbReference type="InterPro" id="IPR000719">
    <property type="entry name" value="Prot_kinase_dom"/>
</dbReference>
<dbReference type="InterPro" id="IPR017441">
    <property type="entry name" value="Protein_kinase_ATP_BS"/>
</dbReference>
<dbReference type="InterPro" id="IPR001245">
    <property type="entry name" value="Ser-Thr/Tyr_kinase_cat_dom"/>
</dbReference>
<dbReference type="InterPro" id="IPR008271">
    <property type="entry name" value="Ser/Thr_kinase_AS"/>
</dbReference>
<dbReference type="PANTHER" id="PTHR46204:SF2">
    <property type="entry name" value="CHITIN ELICITOR RECEPTOR KINASE 1"/>
    <property type="match status" value="1"/>
</dbReference>
<dbReference type="PANTHER" id="PTHR46204">
    <property type="entry name" value="CHITIN ELICITOR RECEPTOR KINASE 1-RELATED"/>
    <property type="match status" value="1"/>
</dbReference>
<dbReference type="Pfam" id="PF23577">
    <property type="entry name" value="LysM_RLK"/>
    <property type="match status" value="1"/>
</dbReference>
<dbReference type="Pfam" id="PF07714">
    <property type="entry name" value="PK_Tyr_Ser-Thr"/>
    <property type="match status" value="1"/>
</dbReference>
<dbReference type="SMART" id="SM00220">
    <property type="entry name" value="S_TKc"/>
    <property type="match status" value="1"/>
</dbReference>
<dbReference type="SUPFAM" id="SSF56112">
    <property type="entry name" value="Protein kinase-like (PK-like)"/>
    <property type="match status" value="1"/>
</dbReference>
<dbReference type="PROSITE" id="PS00107">
    <property type="entry name" value="PROTEIN_KINASE_ATP"/>
    <property type="match status" value="1"/>
</dbReference>
<dbReference type="PROSITE" id="PS50011">
    <property type="entry name" value="PROTEIN_KINASE_DOM"/>
    <property type="match status" value="1"/>
</dbReference>
<dbReference type="PROSITE" id="PS00108">
    <property type="entry name" value="PROTEIN_KINASE_ST"/>
    <property type="match status" value="1"/>
</dbReference>
<organism>
    <name type="scientific">Oryza sativa subsp. japonica</name>
    <name type="common">Rice</name>
    <dbReference type="NCBI Taxonomy" id="39947"/>
    <lineage>
        <taxon>Eukaryota</taxon>
        <taxon>Viridiplantae</taxon>
        <taxon>Streptophyta</taxon>
        <taxon>Embryophyta</taxon>
        <taxon>Tracheophyta</taxon>
        <taxon>Spermatophyta</taxon>
        <taxon>Magnoliopsida</taxon>
        <taxon>Liliopsida</taxon>
        <taxon>Poales</taxon>
        <taxon>Poaceae</taxon>
        <taxon>BOP clade</taxon>
        <taxon>Oryzoideae</taxon>
        <taxon>Oryzeae</taxon>
        <taxon>Oryzinae</taxon>
        <taxon>Oryza</taxon>
        <taxon>Oryza sativa</taxon>
    </lineage>
</organism>
<reference key="1">
    <citation type="journal article" date="2005" name="Nature">
        <title>The map-based sequence of the rice genome.</title>
        <authorList>
            <consortium name="International rice genome sequencing project (IRGSP)"/>
        </authorList>
    </citation>
    <scope>NUCLEOTIDE SEQUENCE [LARGE SCALE GENOMIC DNA]</scope>
    <source>
        <strain>cv. Nipponbare</strain>
    </source>
</reference>
<reference key="2">
    <citation type="journal article" date="2008" name="Nucleic Acids Res.">
        <title>The rice annotation project database (RAP-DB): 2008 update.</title>
        <authorList>
            <consortium name="The rice annotation project (RAP)"/>
        </authorList>
    </citation>
    <scope>GENOME REANNOTATION</scope>
    <source>
        <strain>cv. Nipponbare</strain>
    </source>
</reference>
<reference key="3">
    <citation type="journal article" date="2013" name="Rice">
        <title>Improvement of the Oryza sativa Nipponbare reference genome using next generation sequence and optical map data.</title>
        <authorList>
            <person name="Kawahara Y."/>
            <person name="de la Bastide M."/>
            <person name="Hamilton J.P."/>
            <person name="Kanamori H."/>
            <person name="McCombie W.R."/>
            <person name="Ouyang S."/>
            <person name="Schwartz D.C."/>
            <person name="Tanaka T."/>
            <person name="Wu J."/>
            <person name="Zhou S."/>
            <person name="Childs K.L."/>
            <person name="Davidson R.M."/>
            <person name="Lin H."/>
            <person name="Quesada-Ocampo L."/>
            <person name="Vaillancourt B."/>
            <person name="Sakai H."/>
            <person name="Lee S.S."/>
            <person name="Kim J."/>
            <person name="Numa H."/>
            <person name="Itoh T."/>
            <person name="Buell C.R."/>
            <person name="Matsumoto T."/>
        </authorList>
    </citation>
    <scope>GENOME REANNOTATION</scope>
    <source>
        <strain>cv. Nipponbare</strain>
    </source>
</reference>
<reference key="4">
    <citation type="journal article" date="2003" name="Science">
        <title>Collection, mapping, and annotation of over 28,000 cDNA clones from japonica rice.</title>
        <authorList>
            <consortium name="The rice full-length cDNA consortium"/>
        </authorList>
    </citation>
    <scope>NUCLEOTIDE SEQUENCE [LARGE SCALE MRNA]</scope>
    <source>
        <strain>cv. Nipponbare</strain>
    </source>
</reference>
<reference key="5">
    <citation type="journal article" date="2010" name="Plant J.">
        <title>Two LysM receptor molecules, CEBiP and OsCERK1, cooperatively regulate chitin elicitor signaling in rice.</title>
        <authorList>
            <person name="Shimizu T."/>
            <person name="Nakano T."/>
            <person name="Takamizawa D."/>
            <person name="Desaki Y."/>
            <person name="Ishii-Minami N."/>
            <person name="Nishizawa Y."/>
            <person name="Minami E."/>
            <person name="Okada K."/>
            <person name="Yamane H."/>
            <person name="Kaku H."/>
            <person name="Shibuya N."/>
        </authorList>
    </citation>
    <scope>FUNCTION</scope>
    <scope>DISRUPTION PHENOTYPE</scope>
    <scope>HOMOOLIGOMERS</scope>
    <scope>INTERACTION WITH CEBIP</scope>
    <scope>TISSUE SPECIFICITY</scope>
    <source>
        <strain>cv. Nipponbare</strain>
    </source>
</reference>
<reference key="6">
    <citation type="journal article" date="2012" name="Plant Cell Physiol.">
        <title>Functional characterization of CEBiP and CERK1 homologs in Arabidopsis and rice reveals the presence of different chitin receptor systems in plants.</title>
        <authorList>
            <person name="Shinya T."/>
            <person name="Motoyama N."/>
            <person name="Ikeda A."/>
            <person name="Wada M."/>
            <person name="Kamiya K."/>
            <person name="Hayafune M."/>
            <person name="Kaku H."/>
            <person name="Shibuya N."/>
        </authorList>
    </citation>
    <scope>FUNCTION</scope>
</reference>
<reference key="7">
    <citation type="journal article" date="2013" name="Cell Host Microbe">
        <title>A receptor-like cytoplasmic kinase targeted by a plant pathogen effector is directly phosphorylated by the chitin receptor and mediates rice immunity.</title>
        <authorList>
            <person name="Yamaguchi K."/>
            <person name="Yamada K."/>
            <person name="Ishikawa K."/>
            <person name="Yoshimura S."/>
            <person name="Hayashi N."/>
            <person name="Uchihashi K."/>
            <person name="Ishihama N."/>
            <person name="Kishi-Kaboshi M."/>
            <person name="Takahashi A."/>
            <person name="Tsuge S."/>
            <person name="Ochiai H."/>
            <person name="Tada Y."/>
            <person name="Shimamoto K."/>
            <person name="Yoshioka H."/>
            <person name="Kawasaki T."/>
        </authorList>
    </citation>
    <scope>FUNCTION</scope>
    <scope>CATALYTIC ACTIVITY</scope>
</reference>
<reference key="8">
    <citation type="journal article" date="2014" name="Mol. Plant Microbe Interact.">
        <title>Targeted gene disruption of OsCERK1 reveals its indispensable role in chitin perception and involvement in the peptidoglycan response and immunity in rice.</title>
        <authorList>
            <person name="Kouzai Y."/>
            <person name="Mochizuki S."/>
            <person name="Nakajima K."/>
            <person name="Desaki Y."/>
            <person name="Hayafune M."/>
            <person name="Miyazaki H."/>
            <person name="Yokotani N."/>
            <person name="Ozawa K."/>
            <person name="Minami E."/>
            <person name="Kaku H."/>
            <person name="Shibuya N."/>
            <person name="Nishizawa Y."/>
        </authorList>
    </citation>
    <scope>FUNCTION</scope>
    <scope>INTERACTION WITH LYP4 AND LYP6</scope>
    <scope>SUBCELLULAR LOCATION</scope>
</reference>
<reference key="9">
    <citation type="journal article" date="2014" name="Plant J.">
        <title>OsCERK1 and OsRLCK176 play important roles in peptidoglycan and chitin signaling in rice innate immunity.</title>
        <authorList>
            <person name="Ao Y."/>
            <person name="Li Z."/>
            <person name="Feng D."/>
            <person name="Xiong F."/>
            <person name="Liu J."/>
            <person name="Li J.F."/>
            <person name="Wang M."/>
            <person name="Wang J."/>
            <person name="Liu B."/>
            <person name="Wang H.B."/>
        </authorList>
    </citation>
    <scope>FUNCTION</scope>
    <scope>INTERACTION WITH LYP4; LYP6 AND RLCK176</scope>
    <scope>SUBCELLULAR LOCATION</scope>
</reference>
<protein>
    <recommendedName>
        <fullName evidence="12">Chitin elicitor receptor kinase 1</fullName>
        <shortName evidence="12">OsCERK1</shortName>
        <ecNumber evidence="9">2.7.11.1</ecNumber>
    </recommendedName>
    <alternativeName>
        <fullName evidence="13">LysM domain receptor-like kinase 1</fullName>
        <shortName evidence="13">LysM RLK1</shortName>
        <shortName evidence="13">LysM-containing receptor-like kinase 1</shortName>
    </alternativeName>
    <alternativeName>
        <fullName evidence="12">LysM domain receptor-like kinase 9</fullName>
        <shortName evidence="12">OsLysM-RLK9</shortName>
    </alternativeName>
</protein>
<keyword id="KW-0002">3D-structure</keyword>
<keyword id="KW-0067">ATP-binding</keyword>
<keyword id="KW-1003">Cell membrane</keyword>
<keyword id="KW-0147">Chitin-binding</keyword>
<keyword id="KW-1015">Disulfide bond</keyword>
<keyword id="KW-0325">Glycoprotein</keyword>
<keyword id="KW-0391">Immunity</keyword>
<keyword id="KW-0399">Innate immunity</keyword>
<keyword id="KW-0418">Kinase</keyword>
<keyword id="KW-0472">Membrane</keyword>
<keyword id="KW-0547">Nucleotide-binding</keyword>
<keyword id="KW-0611">Plant defense</keyword>
<keyword id="KW-0675">Receptor</keyword>
<keyword id="KW-1185">Reference proteome</keyword>
<keyword id="KW-0723">Serine/threonine-protein kinase</keyword>
<keyword id="KW-0732">Signal</keyword>
<keyword id="KW-0808">Transferase</keyword>
<keyword id="KW-0812">Transmembrane</keyword>
<keyword id="KW-1133">Transmembrane helix</keyword>
<comment type="function">
    <text evidence="7 8 9 10 11">Lysin motif (LysM) receptor kinase required as a cell surface receptor for chitin elicitor (chitooligosaccharides) signaling leading to innate immunity in response to biotic stresses. Involved in the resistance to pathogenic fungi, probably by sensing microbe-associated molecular patterns (MAMP) and pathogen-associated molecular patterns (PAMP) (PubMed:21070404, PubMed:22891159, PubMed:24964058). Involved in the detection of microbial peptidoglycans (PGNs) and mediates PGN response (PubMed:24964058). Plays dual roles in PGN and chitin signaling during innate immunity. Acts as an adapter for LYP4 and LYP6 and mediates signal transduction from the extracellular to intracellular spaces. Participates in the activation of defense genes during response to PGN and chitin (PubMed:25335639). Phosphorylates the downstream partner RLCK185 in response to chitin elicitation (PubMed:23498959).</text>
</comment>
<comment type="catalytic activity">
    <reaction evidence="9">
        <text>L-seryl-[protein] + ATP = O-phospho-L-seryl-[protein] + ADP + H(+)</text>
        <dbReference type="Rhea" id="RHEA:17989"/>
        <dbReference type="Rhea" id="RHEA-COMP:9863"/>
        <dbReference type="Rhea" id="RHEA-COMP:11604"/>
        <dbReference type="ChEBI" id="CHEBI:15378"/>
        <dbReference type="ChEBI" id="CHEBI:29999"/>
        <dbReference type="ChEBI" id="CHEBI:30616"/>
        <dbReference type="ChEBI" id="CHEBI:83421"/>
        <dbReference type="ChEBI" id="CHEBI:456216"/>
        <dbReference type="EC" id="2.7.11.1"/>
    </reaction>
</comment>
<comment type="catalytic activity">
    <reaction evidence="9">
        <text>L-threonyl-[protein] + ATP = O-phospho-L-threonyl-[protein] + ADP + H(+)</text>
        <dbReference type="Rhea" id="RHEA:46608"/>
        <dbReference type="Rhea" id="RHEA-COMP:11060"/>
        <dbReference type="Rhea" id="RHEA-COMP:11605"/>
        <dbReference type="ChEBI" id="CHEBI:15378"/>
        <dbReference type="ChEBI" id="CHEBI:30013"/>
        <dbReference type="ChEBI" id="CHEBI:30616"/>
        <dbReference type="ChEBI" id="CHEBI:61977"/>
        <dbReference type="ChEBI" id="CHEBI:456216"/>
        <dbReference type="EC" id="2.7.11.1"/>
    </reaction>
</comment>
<comment type="subunit">
    <text evidence="7 10 11">Homooligomer. Interacts with CEBIP (PubMed:21070404). Interacts with LYP4 and LYP6 (PubMed:24964058, PubMed:25335639). Interacts with RLCK176 (PubMed:25335639).</text>
</comment>
<comment type="subcellular location">
    <subcellularLocation>
        <location evidence="10 11">Cell membrane</location>
        <topology evidence="3">Single-pass membrane protein</topology>
    </subcellularLocation>
</comment>
<comment type="tissue specificity">
    <text evidence="7">Expressed in seedlings, roots, shoots and stems, and, to a lower extent, in flowers.</text>
</comment>
<comment type="PTM">
    <text evidence="1">Autophosphorylated; induced by chitin and derivatives.</text>
</comment>
<comment type="disruption phenotype">
    <text evidence="7">Suppression of the defense responses induced by chitin oligosaccharides.</text>
</comment>
<comment type="similarity">
    <text evidence="4">Belongs to the protein kinase superfamily. Ser/Thr protein kinase family.</text>
</comment>
<comment type="sequence caution" evidence="13">
    <conflict type="erroneous gene model prediction">
        <sequence resource="EMBL-CDS" id="BAD01244"/>
    </conflict>
</comment>
<comment type="sequence caution" evidence="13">
    <conflict type="erroneous gene model prediction">
        <sequence resource="EMBL-CDS" id="BAD33138"/>
    </conflict>
</comment>
<comment type="sequence caution" evidence="13">
    <conflict type="erroneous gene model prediction">
        <sequence resource="EMBL-CDS" id="BAF24284"/>
    </conflict>
</comment>
<comment type="sequence caution" evidence="13">
    <conflict type="erroneous initiation">
        <sequence resource="EMBL-CDS" id="BAG99408"/>
    </conflict>
    <text>Truncated N-terminus.</text>
</comment>
<comment type="sequence caution" evidence="13">
    <conflict type="erroneous initiation">
        <sequence resource="EMBL-CDS" id="BAG99505"/>
    </conflict>
    <text>Truncated N-terminus.</text>
</comment>
<proteinExistence type="evidence at protein level"/>
<name>CERK1_ORYSJ</name>